<keyword id="KW-1185">Reference proteome</keyword>
<protein>
    <recommendedName>
        <fullName evidence="1">UPF0122 protein BLi01817/BL02321</fullName>
    </recommendedName>
</protein>
<proteinExistence type="inferred from homology"/>
<reference key="1">
    <citation type="journal article" date="2004" name="J. Mol. Microbiol. Biotechnol.">
        <title>The complete genome sequence of Bacillus licheniformis DSM13, an organism with great industrial potential.</title>
        <authorList>
            <person name="Veith B."/>
            <person name="Herzberg C."/>
            <person name="Steckel S."/>
            <person name="Feesche J."/>
            <person name="Maurer K.H."/>
            <person name="Ehrenreich P."/>
            <person name="Baeumer S."/>
            <person name="Henne A."/>
            <person name="Liesegang H."/>
            <person name="Merkl R."/>
            <person name="Ehrenreich A."/>
            <person name="Gottschalk G."/>
        </authorList>
    </citation>
    <scope>NUCLEOTIDE SEQUENCE [LARGE SCALE GENOMIC DNA]</scope>
    <source>
        <strain>ATCC 14580 / DSM 13 / JCM 2505 / CCUG 7422 / NBRC 12200 / NCIMB 9375 / NCTC 10341 / NRRL NRS-1264 / Gibson 46</strain>
    </source>
</reference>
<reference key="2">
    <citation type="journal article" date="2004" name="Genome Biol.">
        <title>Complete genome sequence of the industrial bacterium Bacillus licheniformis and comparisons with closely related Bacillus species.</title>
        <authorList>
            <person name="Rey M.W."/>
            <person name="Ramaiya P."/>
            <person name="Nelson B.A."/>
            <person name="Brody-Karpin S.D."/>
            <person name="Zaretsky E.J."/>
            <person name="Tang M."/>
            <person name="Lopez de Leon A."/>
            <person name="Xiang H."/>
            <person name="Gusti V."/>
            <person name="Clausen I.G."/>
            <person name="Olsen P.B."/>
            <person name="Rasmussen M.D."/>
            <person name="Andersen J.T."/>
            <person name="Joergensen P.L."/>
            <person name="Larsen T.S."/>
            <person name="Sorokin A."/>
            <person name="Bolotin A."/>
            <person name="Lapidus A."/>
            <person name="Galleron N."/>
            <person name="Ehrlich S.D."/>
            <person name="Berka R.M."/>
        </authorList>
    </citation>
    <scope>NUCLEOTIDE SEQUENCE [LARGE SCALE GENOMIC DNA]</scope>
    <source>
        <strain>ATCC 14580 / DSM 13 / JCM 2505 / CCUG 7422 / NBRC 12200 / NCIMB 9375 / NCTC 10341 / NRRL NRS-1264 / Gibson 46</strain>
    </source>
</reference>
<feature type="chain" id="PRO_1000012519" description="UPF0122 protein BLi01817/BL02321">
    <location>
        <begin position="1"/>
        <end position="107"/>
    </location>
</feature>
<name>Y2321_BACLD</name>
<dbReference type="EMBL" id="CP000002">
    <property type="protein sequence ID" value="AAU23352.2"/>
    <property type="molecule type" value="Genomic_DNA"/>
</dbReference>
<dbReference type="EMBL" id="AE017333">
    <property type="protein sequence ID" value="AAU40712.1"/>
    <property type="molecule type" value="Genomic_DNA"/>
</dbReference>
<dbReference type="RefSeq" id="WP_009328526.1">
    <property type="nucleotide sequence ID" value="NC_006322.1"/>
</dbReference>
<dbReference type="SMR" id="Q65JQ2"/>
<dbReference type="STRING" id="279010.BL02321"/>
<dbReference type="KEGG" id="bld:BLi01817"/>
<dbReference type="KEGG" id="bli:BL02321"/>
<dbReference type="eggNOG" id="COG2739">
    <property type="taxonomic scope" value="Bacteria"/>
</dbReference>
<dbReference type="HOGENOM" id="CLU_129218_1_0_9"/>
<dbReference type="Proteomes" id="UP000000606">
    <property type="component" value="Chromosome"/>
</dbReference>
<dbReference type="Gene3D" id="1.10.10.10">
    <property type="entry name" value="Winged helix-like DNA-binding domain superfamily/Winged helix DNA-binding domain"/>
    <property type="match status" value="1"/>
</dbReference>
<dbReference type="HAMAP" id="MF_00245">
    <property type="entry name" value="UPF0122"/>
    <property type="match status" value="1"/>
</dbReference>
<dbReference type="InterPro" id="IPR013324">
    <property type="entry name" value="RNA_pol_sigma_r3/r4-like"/>
</dbReference>
<dbReference type="InterPro" id="IPR007394">
    <property type="entry name" value="UPF0122"/>
</dbReference>
<dbReference type="InterPro" id="IPR054831">
    <property type="entry name" value="UPF0122_fam_protein"/>
</dbReference>
<dbReference type="InterPro" id="IPR036388">
    <property type="entry name" value="WH-like_DNA-bd_sf"/>
</dbReference>
<dbReference type="NCBIfam" id="NF001068">
    <property type="entry name" value="PRK00118.1-4"/>
    <property type="match status" value="1"/>
</dbReference>
<dbReference type="NCBIfam" id="NF001070">
    <property type="entry name" value="PRK00118.1-6"/>
    <property type="match status" value="1"/>
</dbReference>
<dbReference type="NCBIfam" id="NF045758">
    <property type="entry name" value="YlxM"/>
    <property type="match status" value="1"/>
</dbReference>
<dbReference type="PANTHER" id="PTHR40083">
    <property type="entry name" value="UPF0122 PROTEIN CBO2450/CLC_2298"/>
    <property type="match status" value="1"/>
</dbReference>
<dbReference type="PANTHER" id="PTHR40083:SF1">
    <property type="entry name" value="UPF0122 PROTEIN YLXM"/>
    <property type="match status" value="1"/>
</dbReference>
<dbReference type="Pfam" id="PF04297">
    <property type="entry name" value="UPF0122"/>
    <property type="match status" value="1"/>
</dbReference>
<dbReference type="SUPFAM" id="SSF88659">
    <property type="entry name" value="Sigma3 and sigma4 domains of RNA polymerase sigma factors"/>
    <property type="match status" value="1"/>
</dbReference>
<evidence type="ECO:0000255" key="1">
    <source>
        <dbReference type="HAMAP-Rule" id="MF_00245"/>
    </source>
</evidence>
<gene>
    <name type="ordered locus">BLi01817</name>
    <name type="ordered locus">BL02321</name>
</gene>
<sequence>MTLEKTTRMNYLFDFYQTLLTSKQKSYMSLYYLDDFSLGEIAEEYHVSRQAVYDNIKRTEAMLEQYEEKLLLFKKFQERKKIFEALRKLTDGQPEAESLIDALEKLD</sequence>
<accession>Q65JQ2</accession>
<accession>Q62V57</accession>
<organism>
    <name type="scientific">Bacillus licheniformis (strain ATCC 14580 / DSM 13 / JCM 2505 / CCUG 7422 / NBRC 12200 / NCIMB 9375 / NCTC 10341 / NRRL NRS-1264 / Gibson 46)</name>
    <dbReference type="NCBI Taxonomy" id="279010"/>
    <lineage>
        <taxon>Bacteria</taxon>
        <taxon>Bacillati</taxon>
        <taxon>Bacillota</taxon>
        <taxon>Bacilli</taxon>
        <taxon>Bacillales</taxon>
        <taxon>Bacillaceae</taxon>
        <taxon>Bacillus</taxon>
    </lineage>
</organism>
<comment type="function">
    <text evidence="1">Might take part in the signal recognition particle (SRP) pathway. This is inferred from the conservation of its genetic proximity to ftsY/ffh. May be a regulatory protein.</text>
</comment>
<comment type="similarity">
    <text evidence="1">Belongs to the UPF0122 family.</text>
</comment>